<accession>Q07942</accession>
<comment type="function">
    <text>The key enzymatic reactions in nitrogen fixation are catalyzed by the nitrogenase complex, which has 2 components: the iron protein (component 2) and a component 1 which is either a molybdenum-iron protein, a vanadium-iron, or an iron-iron protein.</text>
</comment>
<comment type="catalytic activity">
    <reaction>
        <text>N2 + 8 reduced [2Fe-2S]-[ferredoxin] + 16 ATP + 16 H2O = H2 + 8 oxidized [2Fe-2S]-[ferredoxin] + 2 NH4(+) + 16 ADP + 16 phosphate + 6 H(+)</text>
        <dbReference type="Rhea" id="RHEA:21448"/>
        <dbReference type="Rhea" id="RHEA-COMP:10000"/>
        <dbReference type="Rhea" id="RHEA-COMP:10001"/>
        <dbReference type="ChEBI" id="CHEBI:15377"/>
        <dbReference type="ChEBI" id="CHEBI:15378"/>
        <dbReference type="ChEBI" id="CHEBI:17997"/>
        <dbReference type="ChEBI" id="CHEBI:18276"/>
        <dbReference type="ChEBI" id="CHEBI:28938"/>
        <dbReference type="ChEBI" id="CHEBI:30616"/>
        <dbReference type="ChEBI" id="CHEBI:33737"/>
        <dbReference type="ChEBI" id="CHEBI:33738"/>
        <dbReference type="ChEBI" id="CHEBI:43474"/>
        <dbReference type="ChEBI" id="CHEBI:456216"/>
        <dbReference type="EC" id="1.18.6.1"/>
    </reaction>
</comment>
<comment type="cofactor">
    <cofactor>
        <name>[4Fe-4S] cluster</name>
        <dbReference type="ChEBI" id="CHEBI:49883"/>
    </cofactor>
    <text>Binds 1 [4Fe-4S] cluster per dimer.</text>
</comment>
<comment type="subunit">
    <text>Homodimer.</text>
</comment>
<comment type="PTM">
    <text evidence="1">The reversible ADP-ribosylation of Arg-100 inactivates the nitrogenase reductase and regulates nitrogenase activity.</text>
</comment>
<comment type="miscellaneous">
    <text>This subunit is associated with the iron-iron nitrogenase component 2 (the third type of nitrogenase).</text>
</comment>
<comment type="similarity">
    <text evidence="2">Belongs to the NifH/BchL/ChlL family.</text>
</comment>
<protein>
    <recommendedName>
        <fullName>Nitrogenase iron protein 2</fullName>
        <ecNumber>1.18.6.1</ecNumber>
    </recommendedName>
    <alternativeName>
        <fullName>Nitrogenase Fe protein 2</fullName>
    </alternativeName>
    <alternativeName>
        <fullName>Nitrogenase component II</fullName>
    </alternativeName>
    <alternativeName>
        <fullName>Nitrogenase reductase</fullName>
    </alternativeName>
</protein>
<organism>
    <name type="scientific">Rhodobacter capsulatus</name>
    <name type="common">Rhodopseudomonas capsulata</name>
    <dbReference type="NCBI Taxonomy" id="1061"/>
    <lineage>
        <taxon>Bacteria</taxon>
        <taxon>Pseudomonadati</taxon>
        <taxon>Pseudomonadota</taxon>
        <taxon>Alphaproteobacteria</taxon>
        <taxon>Rhodobacterales</taxon>
        <taxon>Rhodobacter group</taxon>
        <taxon>Rhodobacter</taxon>
    </lineage>
</organism>
<feature type="chain" id="PRO_0000139528" description="Nitrogenase iron protein 2">
    <location>
        <begin position="1"/>
        <end position="275"/>
    </location>
</feature>
<feature type="binding site" evidence="1">
    <location>
        <begin position="9"/>
        <end position="16"/>
    </location>
    <ligand>
        <name>ATP</name>
        <dbReference type="ChEBI" id="CHEBI:30616"/>
    </ligand>
</feature>
<feature type="binding site" evidence="1">
    <location>
        <position position="97"/>
    </location>
    <ligand>
        <name>[4Fe-4S] cluster</name>
        <dbReference type="ChEBI" id="CHEBI:49883"/>
        <note>ligand shared between dimeric partners</note>
    </ligand>
</feature>
<feature type="binding site" evidence="1">
    <location>
        <position position="132"/>
    </location>
    <ligand>
        <name>[4Fe-4S] cluster</name>
        <dbReference type="ChEBI" id="CHEBI:49883"/>
        <note>ligand shared between dimeric partners</note>
    </ligand>
</feature>
<feature type="modified residue" description="ADP-ribosylarginine; by dinitrogenase reductase ADP-ribosyltransferase" evidence="1">
    <location>
        <position position="100"/>
    </location>
</feature>
<dbReference type="EC" id="1.18.6.1"/>
<dbReference type="EMBL" id="X70033">
    <property type="protein sequence ID" value="CAA49624.1"/>
    <property type="molecule type" value="Genomic_DNA"/>
</dbReference>
<dbReference type="PIR" id="S34944">
    <property type="entry name" value="S34944"/>
</dbReference>
<dbReference type="SMR" id="Q07942"/>
<dbReference type="OMA" id="AIGTQMI"/>
<dbReference type="GO" id="GO:0051539">
    <property type="term" value="F:4 iron, 4 sulfur cluster binding"/>
    <property type="evidence" value="ECO:0007669"/>
    <property type="project" value="UniProtKB-KW"/>
</dbReference>
<dbReference type="GO" id="GO:0005524">
    <property type="term" value="F:ATP binding"/>
    <property type="evidence" value="ECO:0007669"/>
    <property type="project" value="UniProtKB-UniRule"/>
</dbReference>
<dbReference type="GO" id="GO:0046872">
    <property type="term" value="F:metal ion binding"/>
    <property type="evidence" value="ECO:0007669"/>
    <property type="project" value="UniProtKB-KW"/>
</dbReference>
<dbReference type="GO" id="GO:0016163">
    <property type="term" value="F:nitrogenase activity"/>
    <property type="evidence" value="ECO:0007669"/>
    <property type="project" value="UniProtKB-UniRule"/>
</dbReference>
<dbReference type="GO" id="GO:0009399">
    <property type="term" value="P:nitrogen fixation"/>
    <property type="evidence" value="ECO:0007669"/>
    <property type="project" value="UniProtKB-UniRule"/>
</dbReference>
<dbReference type="CDD" id="cd02040">
    <property type="entry name" value="NifH"/>
    <property type="match status" value="1"/>
</dbReference>
<dbReference type="Gene3D" id="3.40.50.300">
    <property type="entry name" value="P-loop containing nucleotide triphosphate hydrolases"/>
    <property type="match status" value="1"/>
</dbReference>
<dbReference type="HAMAP" id="MF_00533">
    <property type="entry name" value="NifH"/>
    <property type="match status" value="1"/>
</dbReference>
<dbReference type="InterPro" id="IPR030655">
    <property type="entry name" value="NifH/chlL_CS"/>
</dbReference>
<dbReference type="InterPro" id="IPR000392">
    <property type="entry name" value="NifH/frxC"/>
</dbReference>
<dbReference type="InterPro" id="IPR005977">
    <property type="entry name" value="Nitrogenase_Fe_NifH"/>
</dbReference>
<dbReference type="InterPro" id="IPR027417">
    <property type="entry name" value="P-loop_NTPase"/>
</dbReference>
<dbReference type="NCBIfam" id="TIGR01287">
    <property type="entry name" value="nifH"/>
    <property type="match status" value="1"/>
</dbReference>
<dbReference type="PANTHER" id="PTHR42864">
    <property type="entry name" value="LIGHT-INDEPENDENT PROTOCHLOROPHYLLIDE REDUCTASE IRON-SULFUR ATP-BINDING PROTEIN"/>
    <property type="match status" value="1"/>
</dbReference>
<dbReference type="PANTHER" id="PTHR42864:SF2">
    <property type="entry name" value="LIGHT-INDEPENDENT PROTOCHLOROPHYLLIDE REDUCTASE IRON-SULFUR ATP-BINDING PROTEIN"/>
    <property type="match status" value="1"/>
</dbReference>
<dbReference type="Pfam" id="PF00142">
    <property type="entry name" value="Fer4_NifH"/>
    <property type="match status" value="1"/>
</dbReference>
<dbReference type="PIRSF" id="PIRSF000363">
    <property type="entry name" value="Nitrogenase_iron"/>
    <property type="match status" value="1"/>
</dbReference>
<dbReference type="PRINTS" id="PR00091">
    <property type="entry name" value="NITROGNASEII"/>
</dbReference>
<dbReference type="SUPFAM" id="SSF52540">
    <property type="entry name" value="P-loop containing nucleoside triphosphate hydrolases"/>
    <property type="match status" value="1"/>
</dbReference>
<dbReference type="PROSITE" id="PS00746">
    <property type="entry name" value="NIFH_FRXC_1"/>
    <property type="match status" value="1"/>
</dbReference>
<dbReference type="PROSITE" id="PS00692">
    <property type="entry name" value="NIFH_FRXC_2"/>
    <property type="match status" value="1"/>
</dbReference>
<dbReference type="PROSITE" id="PS51026">
    <property type="entry name" value="NIFH_FRXC_3"/>
    <property type="match status" value="1"/>
</dbReference>
<gene>
    <name type="primary">anfH</name>
</gene>
<evidence type="ECO:0000250" key="1"/>
<evidence type="ECO:0000305" key="2"/>
<keyword id="KW-0004">4Fe-4S</keyword>
<keyword id="KW-0013">ADP-ribosylation</keyword>
<keyword id="KW-0067">ATP-binding</keyword>
<keyword id="KW-0408">Iron</keyword>
<keyword id="KW-0411">Iron-sulfur</keyword>
<keyword id="KW-0479">Metal-binding</keyword>
<keyword id="KW-0535">Nitrogen fixation</keyword>
<keyword id="KW-0547">Nucleotide-binding</keyword>
<keyword id="KW-0560">Oxidoreductase</keyword>
<reference key="1">
    <citation type="journal article" date="1993" name="Mol. Microbiol.">
        <title>Characterization of anf genes specific for the alternative nitrogenase and identification of nif genes required for both nitrogenases in Rhodobacter capsulatus.</title>
        <authorList>
            <person name="Schueddekopf K."/>
            <person name="Hennecke S."/>
            <person name="Liese U."/>
            <person name="Kutsche M."/>
            <person name="Klipp W."/>
        </authorList>
    </citation>
    <scope>NUCLEOTIDE SEQUENCE [GENOMIC DNA]</scope>
    <source>
        <strain>B10S</strain>
    </source>
</reference>
<proteinExistence type="inferred from homology"/>
<name>NIFH2_RHOCA</name>
<sequence length="275" mass="30178">MTRKIAIYGKGGIGKSTTTQNTAAALAFFHEKNVFIHGCDPKADSTRLILGGLPQQTVMDTLRIEGAERVTVDKVVKTGFKDIRCVESGGPEPGVGCAGRGVITAIDLMEENEAYSEDLDFLFFDVLGDVVCGGFAMPIRDGKAEEVYIVASGEMMAIYAANNICKGLAKYARQSGVRLGGIICNSRNVDGEKEFLEEFTKAIGTKMIHFVPRDNIVQKAEFNKQTVTEFQPEANQAQEYRELGRKIIENEDFVIPKPLAMDELEAMVVKYGLMD</sequence>